<feature type="chain" id="PRO_0000438914" description="Transcription factor MYB11">
    <location>
        <begin position="1"/>
        <end position="343"/>
    </location>
</feature>
<feature type="domain" description="HTH myb-type 1" evidence="1">
    <location>
        <begin position="9"/>
        <end position="61"/>
    </location>
</feature>
<feature type="domain" description="HTH myb-type 2" evidence="1">
    <location>
        <begin position="62"/>
        <end position="116"/>
    </location>
</feature>
<feature type="DNA-binding region" description="H-T-H motif" evidence="1">
    <location>
        <begin position="37"/>
        <end position="61"/>
    </location>
</feature>
<feature type="DNA-binding region" description="H-T-H motif" evidence="1">
    <location>
        <begin position="89"/>
        <end position="112"/>
    </location>
</feature>
<feature type="region of interest" description="Disordered" evidence="2">
    <location>
        <begin position="126"/>
        <end position="146"/>
    </location>
</feature>
<feature type="sequence conflict" description="In Ref. 1; AAS10072." evidence="10" ref="1">
    <original>S</original>
    <variation>F</variation>
    <location>
        <position position="260"/>
    </location>
</feature>
<evidence type="ECO:0000255" key="1">
    <source>
        <dbReference type="PROSITE-ProRule" id="PRU00625"/>
    </source>
</evidence>
<evidence type="ECO:0000256" key="2">
    <source>
        <dbReference type="SAM" id="MobiDB-lite"/>
    </source>
</evidence>
<evidence type="ECO:0000269" key="3">
    <source>
    </source>
</evidence>
<evidence type="ECO:0000269" key="4">
    <source>
    </source>
</evidence>
<evidence type="ECO:0000269" key="5">
    <source>
    </source>
</evidence>
<evidence type="ECO:0000269" key="6">
    <source>
    </source>
</evidence>
<evidence type="ECO:0000269" key="7">
    <source>
    </source>
</evidence>
<evidence type="ECO:0000303" key="8">
    <source>
    </source>
</evidence>
<evidence type="ECO:0000303" key="9">
    <source>
    </source>
</evidence>
<evidence type="ECO:0000305" key="10"/>
<evidence type="ECO:0000312" key="11">
    <source>
        <dbReference type="Araport" id="AT3G62610"/>
    </source>
</evidence>
<evidence type="ECO:0000312" key="12">
    <source>
        <dbReference type="EMBL" id="CAB83111.1"/>
    </source>
</evidence>
<comment type="function">
    <text evidence="3 4 5 6">Modulates overall growth by reducing the proliferation activity of meristematic cells and delaying development (PubMed:18359753). Flavonol-specific transcription activator involved in the regulation of several genes of flavonoid biosynthesis. Activates the expression of CHS, CHI, F3H and FLS1 (PubMed:17419845, PubMed:20731781). Confers tolerance to UV-B (PubMed:19895401).</text>
</comment>
<comment type="interaction">
    <interactant intactId="EBI-15217402">
        <id>Q9LZK4</id>
    </interactant>
    <interactant intactId="EBI-2358527">
        <id>Q9M1Z5</id>
        <label>MPK10</label>
    </interactant>
    <organismsDiffer>false</organismsDiffer>
    <experiments>3</experiments>
</comment>
<comment type="subcellular location">
    <subcellularLocation>
        <location evidence="1">Nucleus</location>
    </subcellularLocation>
</comment>
<comment type="tissue specificity">
    <text evidence="3">Expressed in seedlings, roots, cotyledons, leaves and apical meristems.</text>
</comment>
<comment type="developmental stage">
    <text evidence="3 4">Expressed in root and shoot meristems and also in young still meristematic leaf and flower primordia (PubMed:18359753). In seedlings, accumulates ubiquitously at low levels. Expressed in shoot apical meristem (SAM), primary leaves, apex of cotyledons, and at the hypocotyl-root transition. In roots, present at the origin of lateral roots and the root tip, as well as in the vascular tissue of lateral roots (PubMed:17419845).</text>
</comment>
<comment type="disruption phenotype">
    <text evidence="3 4 5 6">Accelerated germination, faster hypocotyl and primary root elongation, more lateral and adventitious roots formation, faster development of the inflorescence, and more lateral inflorescences initiation and fruits (PubMed:18359753). The double mutant myb11 myb111 and triple mutant myb11 myb12 myb111 accumulate less flavonols in roots, leaves, stems, inflorescence, and siliques. The double mutant myb11 myb12 is specifically altered in flavonols content of siliques (PubMed:20731781). The triple mutant myb11 myb12 myb111 is impaired in flavonols biosynthesis and exhibits a reduced UV-B tolerance (PubMed:17419845, PubMed:19895401).</text>
</comment>
<comment type="biotechnology">
    <text evidence="7">Promotes flavonoid biosynthesis when expressed in tobacco (Nicotiana tabacum) through up-regulation of the biosynthetic genes.</text>
</comment>
<comment type="sequence caution" evidence="10">
    <conflict type="erroneous termination">
        <sequence resource="EMBL-CDS" id="AAC83585"/>
    </conflict>
    <text>Extended C-terminus.</text>
</comment>
<organism>
    <name type="scientific">Arabidopsis thaliana</name>
    <name type="common">Mouse-ear cress</name>
    <dbReference type="NCBI Taxonomy" id="3702"/>
    <lineage>
        <taxon>Eukaryota</taxon>
        <taxon>Viridiplantae</taxon>
        <taxon>Streptophyta</taxon>
        <taxon>Embryophyta</taxon>
        <taxon>Tracheophyta</taxon>
        <taxon>Spermatophyta</taxon>
        <taxon>Magnoliopsida</taxon>
        <taxon>eudicotyledons</taxon>
        <taxon>Gunneridae</taxon>
        <taxon>Pentapetalae</taxon>
        <taxon>rosids</taxon>
        <taxon>malvids</taxon>
        <taxon>Brassicales</taxon>
        <taxon>Brassicaceae</taxon>
        <taxon>Camelineae</taxon>
        <taxon>Arabidopsis</taxon>
    </lineage>
</organism>
<sequence>MGRAPCCEKVGIKKGRWTAEEDRTLSDYIQSNGEGSWRSLPKNAGLKRCGKSCRLRWINYLRSDIKRGNITPEEEDVIVKLHSTLGTRWSTIASNLPGRTDNEIKNYWNSHLSRKLHGYFRKPTVANTVENAPPPPKRRPGRTSRSAMKPKFILNPKNHKTPNSFKANKSDIVLPTTTIENGEGDKEDALMVLSSSSLSGAEEPGLGPCGYGDDGDCNPSINGDDGALCLNDDIFDSCFLLDDSHAVHVSSCESNNVKNSEPYGGMSVGHKNIETMADDFVDWDFVWREGQTLWDEKEDLDSVLSRLLDGEEMESEIRQRDSNDFGEPLDIDEENKMAAWLLS</sequence>
<protein>
    <recommendedName>
        <fullName evidence="9">Transcription factor MYB11</fullName>
    </recommendedName>
    <alternativeName>
        <fullName evidence="9">Myb-related protein 11</fullName>
        <shortName evidence="9">AtMYB11</shortName>
    </alternativeName>
    <alternativeName>
        <fullName evidence="8">Protein PRODUCTION OF FLAVONOL GLYCOSIDES 2</fullName>
    </alternativeName>
</protein>
<keyword id="KW-0217">Developmental protein</keyword>
<keyword id="KW-0238">DNA-binding</keyword>
<keyword id="KW-0539">Nucleus</keyword>
<keyword id="KW-1185">Reference proteome</keyword>
<keyword id="KW-0677">Repeat</keyword>
<keyword id="KW-0804">Transcription</keyword>
<keyword id="KW-0805">Transcription regulation</keyword>
<accession>Q9LZK4</accession>
<accession>Q6R078</accession>
<accession>Q9ZTF2</accession>
<gene>
    <name evidence="9" type="primary">MYB11</name>
    <name evidence="8" type="synonym">PFG2</name>
    <name evidence="11" type="ordered locus">At3g62610</name>
    <name evidence="12" type="ORF">F26K9.40</name>
</gene>
<reference key="1">
    <citation type="submission" date="2004-02" db="EMBL/GenBank/DDBJ databases">
        <title>The MYB transcription factor family in Arabidopsis: A genome-wide cloning and expression pattern analysis.</title>
        <authorList>
            <person name="Qu L."/>
            <person name="Gu H."/>
        </authorList>
    </citation>
    <scope>NUCLEOTIDE SEQUENCE [MRNA]</scope>
</reference>
<reference key="2">
    <citation type="journal article" date="2000" name="Nature">
        <title>Sequence and analysis of chromosome 3 of the plant Arabidopsis thaliana.</title>
        <authorList>
            <person name="Salanoubat M."/>
            <person name="Lemcke K."/>
            <person name="Rieger M."/>
            <person name="Ansorge W."/>
            <person name="Unseld M."/>
            <person name="Fartmann B."/>
            <person name="Valle G."/>
            <person name="Bloecker H."/>
            <person name="Perez-Alonso M."/>
            <person name="Obermaier B."/>
            <person name="Delseny M."/>
            <person name="Boutry M."/>
            <person name="Grivell L.A."/>
            <person name="Mache R."/>
            <person name="Puigdomenech P."/>
            <person name="De Simone V."/>
            <person name="Choisne N."/>
            <person name="Artiguenave F."/>
            <person name="Robert C."/>
            <person name="Brottier P."/>
            <person name="Wincker P."/>
            <person name="Cattolico L."/>
            <person name="Weissenbach J."/>
            <person name="Saurin W."/>
            <person name="Quetier F."/>
            <person name="Schaefer M."/>
            <person name="Mueller-Auer S."/>
            <person name="Gabel C."/>
            <person name="Fuchs M."/>
            <person name="Benes V."/>
            <person name="Wurmbach E."/>
            <person name="Drzonek H."/>
            <person name="Erfle H."/>
            <person name="Jordan N."/>
            <person name="Bangert S."/>
            <person name="Wiedelmann R."/>
            <person name="Kranz H."/>
            <person name="Voss H."/>
            <person name="Holland R."/>
            <person name="Brandt P."/>
            <person name="Nyakatura G."/>
            <person name="Vezzi A."/>
            <person name="D'Angelo M."/>
            <person name="Pallavicini A."/>
            <person name="Toppo S."/>
            <person name="Simionati B."/>
            <person name="Conrad A."/>
            <person name="Hornischer K."/>
            <person name="Kauer G."/>
            <person name="Loehnert T.-H."/>
            <person name="Nordsiek G."/>
            <person name="Reichelt J."/>
            <person name="Scharfe M."/>
            <person name="Schoen O."/>
            <person name="Bargues M."/>
            <person name="Terol J."/>
            <person name="Climent J."/>
            <person name="Navarro P."/>
            <person name="Collado C."/>
            <person name="Perez-Perez A."/>
            <person name="Ottenwaelder B."/>
            <person name="Duchemin D."/>
            <person name="Cooke R."/>
            <person name="Laudie M."/>
            <person name="Berger-Llauro C."/>
            <person name="Purnelle B."/>
            <person name="Masuy D."/>
            <person name="de Haan M."/>
            <person name="Maarse A.C."/>
            <person name="Alcaraz J.-P."/>
            <person name="Cottet A."/>
            <person name="Casacuberta E."/>
            <person name="Monfort A."/>
            <person name="Argiriou A."/>
            <person name="Flores M."/>
            <person name="Liguori R."/>
            <person name="Vitale D."/>
            <person name="Mannhaupt G."/>
            <person name="Haase D."/>
            <person name="Schoof H."/>
            <person name="Rudd S."/>
            <person name="Zaccaria P."/>
            <person name="Mewes H.-W."/>
            <person name="Mayer K.F.X."/>
            <person name="Kaul S."/>
            <person name="Town C.D."/>
            <person name="Koo H.L."/>
            <person name="Tallon L.J."/>
            <person name="Jenkins J."/>
            <person name="Rooney T."/>
            <person name="Rizzo M."/>
            <person name="Walts A."/>
            <person name="Utterback T."/>
            <person name="Fujii C.Y."/>
            <person name="Shea T.P."/>
            <person name="Creasy T.H."/>
            <person name="Haas B."/>
            <person name="Maiti R."/>
            <person name="Wu D."/>
            <person name="Peterson J."/>
            <person name="Van Aken S."/>
            <person name="Pai G."/>
            <person name="Militscher J."/>
            <person name="Sellers P."/>
            <person name="Gill J.E."/>
            <person name="Feldblyum T.V."/>
            <person name="Preuss D."/>
            <person name="Lin X."/>
            <person name="Nierman W.C."/>
            <person name="Salzberg S.L."/>
            <person name="White O."/>
            <person name="Venter J.C."/>
            <person name="Fraser C.M."/>
            <person name="Kaneko T."/>
            <person name="Nakamura Y."/>
            <person name="Sato S."/>
            <person name="Kato T."/>
            <person name="Asamizu E."/>
            <person name="Sasamoto S."/>
            <person name="Kimura T."/>
            <person name="Idesawa K."/>
            <person name="Kawashima K."/>
            <person name="Kishida Y."/>
            <person name="Kiyokawa C."/>
            <person name="Kohara M."/>
            <person name="Matsumoto M."/>
            <person name="Matsuno A."/>
            <person name="Muraki A."/>
            <person name="Nakayama S."/>
            <person name="Nakazaki N."/>
            <person name="Shinpo S."/>
            <person name="Takeuchi C."/>
            <person name="Wada T."/>
            <person name="Watanabe A."/>
            <person name="Yamada M."/>
            <person name="Yasuda M."/>
            <person name="Tabata S."/>
        </authorList>
    </citation>
    <scope>NUCLEOTIDE SEQUENCE [LARGE SCALE GENOMIC DNA]</scope>
    <source>
        <strain>cv. Columbia</strain>
    </source>
</reference>
<reference key="3">
    <citation type="journal article" date="2017" name="Plant J.">
        <title>Araport11: a complete reannotation of the Arabidopsis thaliana reference genome.</title>
        <authorList>
            <person name="Cheng C.Y."/>
            <person name="Krishnakumar V."/>
            <person name="Chan A.P."/>
            <person name="Thibaud-Nissen F."/>
            <person name="Schobel S."/>
            <person name="Town C.D."/>
        </authorList>
    </citation>
    <scope>GENOME REANNOTATION</scope>
    <source>
        <strain>cv. Columbia</strain>
    </source>
</reference>
<reference key="4">
    <citation type="journal article" date="1998" name="Plant J.">
        <title>Towards functional characterisation of the members of the R2R3-MYB gene family from Arabidopsis thaliana.</title>
        <authorList>
            <person name="Kranz H.D."/>
            <person name="Denekamp M."/>
            <person name="Greco R."/>
            <person name="Jin H.-L."/>
            <person name="Leyva A."/>
            <person name="Meissner R.C."/>
            <person name="Petroni K."/>
            <person name="Urzainqui A."/>
            <person name="Bevan M."/>
            <person name="Martin C."/>
            <person name="Smeekens S."/>
            <person name="Tonelli C."/>
            <person name="Paz-Ares J."/>
            <person name="Weisshaar B."/>
        </authorList>
    </citation>
    <scope>NUCLEOTIDE SEQUENCE [MRNA] OF 72-343</scope>
    <scope>GENE FAMILY</scope>
    <scope>NOMENCLATURE</scope>
    <source>
        <strain>cv. Columbia</strain>
    </source>
</reference>
<reference key="5">
    <citation type="journal article" date="2001" name="Curr. Opin. Plant Biol.">
        <title>The R2R3-MYB gene family in Arabidopsis thaliana.</title>
        <authorList>
            <person name="Stracke R."/>
            <person name="Werber M."/>
            <person name="Weisshaar B."/>
        </authorList>
    </citation>
    <scope>GENE FAMILY</scope>
    <scope>NOMENCLATURE</scope>
</reference>
<reference key="6">
    <citation type="journal article" date="2006" name="Plant Mol. Biol.">
        <title>The MYB transcription factor superfamily of Arabidopsis: expression analysis and phylogenetic comparison with the rice MYB family.</title>
        <authorList>
            <person name="Chen Y."/>
            <person name="Yang X."/>
            <person name="He K."/>
            <person name="Liu M."/>
            <person name="Li J."/>
            <person name="Gao Z."/>
            <person name="Lin Z."/>
            <person name="Zhang Y."/>
            <person name="Wang X."/>
            <person name="Qiu X."/>
            <person name="Shen Y."/>
            <person name="Zhang L."/>
            <person name="Deng X."/>
            <person name="Luo J."/>
            <person name="Deng X.-W."/>
            <person name="Chen Z."/>
            <person name="Gu H."/>
            <person name="Qu L.-J."/>
        </authorList>
    </citation>
    <scope>GENE FAMILY</scope>
</reference>
<reference key="7">
    <citation type="journal article" date="2007" name="Plant J.">
        <title>Differential regulation of closely related R2R3-MYB transcription factors controls flavonol accumulation in different parts of the Arabidopsis thaliana seedling.</title>
        <authorList>
            <person name="Stracke R."/>
            <person name="Ishihara H."/>
            <person name="Huep G."/>
            <person name="Barsch A."/>
            <person name="Mehrtens F."/>
            <person name="Niehaus K."/>
            <person name="Weisshaar B."/>
        </authorList>
    </citation>
    <scope>FUNCTION</scope>
    <scope>DISRUPTION PHENOTYPE</scope>
    <scope>TISSUE SPECIFICITY</scope>
    <scope>DEVELOPMENTAL STAGE</scope>
    <source>
        <strain>cv. Columbia</strain>
    </source>
</reference>
<reference key="8">
    <citation type="journal article" date="2008" name="J. Exp. Bot.">
        <title>The AtMYB11 gene from Arabidopsis is expressed in meristematic cells and modulates growth in planta and organogenesis in vitro.</title>
        <authorList>
            <person name="Petroni K."/>
            <person name="Falasca G."/>
            <person name="Calvenzani V."/>
            <person name="Allegra D."/>
            <person name="Stolfi C."/>
            <person name="Fabrizi L."/>
            <person name="Altamura M.M."/>
            <person name="Tonelli C."/>
        </authorList>
    </citation>
    <scope>FUNCTION</scope>
    <scope>DISRUPTION PHENOTYPE</scope>
    <scope>DEVELOPMENTAL STAGE</scope>
</reference>
<reference key="9">
    <citation type="journal article" date="2010" name="New Phytol.">
        <title>Analysis of PRODUCTION OF FLAVONOL GLYCOSIDES-dependent flavonol glycoside accumulation in Arabidopsis thaliana plants reveals MYB11-, MYB12- and MYB111-independent flavonol glycoside accumulation.</title>
        <authorList>
            <person name="Stracke R."/>
            <person name="Jahns O."/>
            <person name="Keck M."/>
            <person name="Tohge T."/>
            <person name="Niehaus K."/>
            <person name="Fernie A.R."/>
            <person name="Weisshaar B."/>
        </authorList>
    </citation>
    <scope>FUNCTION</scope>
    <scope>DISRUPTION PHENOTYPE</scope>
    <source>
        <strain>cv. Columbia</strain>
    </source>
</reference>
<reference key="10">
    <citation type="journal article" date="2010" name="Plant Cell Environ.">
        <title>The Arabidopsis bZIP transcription factor HY5 regulates expression of the PFG1/MYB12 gene in response to light and ultraviolet-B radiation.</title>
        <authorList>
            <person name="Stracke R."/>
            <person name="Favory J.-J."/>
            <person name="Gruber H."/>
            <person name="Bartelniewoehner L."/>
            <person name="Bartels S."/>
            <person name="Binkert M."/>
            <person name="Funk M."/>
            <person name="Weisshaar B."/>
            <person name="Ulm R."/>
        </authorList>
    </citation>
    <scope>FUNCTION</scope>
    <scope>DISRUPTION PHENOTYPE</scope>
    <source>
        <strain>cv. Columbia</strain>
    </source>
</reference>
<reference key="11">
    <citation type="journal article" date="2015" name="Plant Cell Rep.">
        <title>Constitutive expression of Arabidopsis MYB transcription factor, AtMYB11, in tobacco modulates flavonoid biosynthesis in favor of flavonol accumulation.</title>
        <authorList>
            <person name="Pandey A."/>
            <person name="Misra P."/>
            <person name="Trivedi P.K."/>
        </authorList>
    </citation>
    <scope>BIOTECHNOLOGY</scope>
    <source>
        <strain>cv. Columbia</strain>
    </source>
</reference>
<name>MYB11_ARATH</name>
<proteinExistence type="evidence at protein level"/>
<dbReference type="EMBL" id="AY519602">
    <property type="protein sequence ID" value="AAS10072.1"/>
    <property type="molecule type" value="mRNA"/>
</dbReference>
<dbReference type="EMBL" id="AL162651">
    <property type="protein sequence ID" value="CAB83111.1"/>
    <property type="molecule type" value="Genomic_DNA"/>
</dbReference>
<dbReference type="EMBL" id="CP002686">
    <property type="protein sequence ID" value="AEE80369.1"/>
    <property type="molecule type" value="Genomic_DNA"/>
</dbReference>
<dbReference type="EMBL" id="AF062863">
    <property type="protein sequence ID" value="AAC83585.1"/>
    <property type="status" value="ALT_TERM"/>
    <property type="molecule type" value="mRNA"/>
</dbReference>
<dbReference type="PIR" id="T48050">
    <property type="entry name" value="T48050"/>
</dbReference>
<dbReference type="PIR" id="T51635">
    <property type="entry name" value="T51635"/>
</dbReference>
<dbReference type="RefSeq" id="NP_191820.1">
    <property type="nucleotide sequence ID" value="NM_116126.3"/>
</dbReference>
<dbReference type="SMR" id="Q9LZK4"/>
<dbReference type="FunCoup" id="Q9LZK4">
    <property type="interactions" value="1"/>
</dbReference>
<dbReference type="IntAct" id="Q9LZK4">
    <property type="interactions" value="6"/>
</dbReference>
<dbReference type="STRING" id="3702.Q9LZK4"/>
<dbReference type="PaxDb" id="3702-AT3G62610.1"/>
<dbReference type="EnsemblPlants" id="AT3G62610.1">
    <property type="protein sequence ID" value="AT3G62610.1"/>
    <property type="gene ID" value="AT3G62610"/>
</dbReference>
<dbReference type="GeneID" id="825435"/>
<dbReference type="Gramene" id="AT3G62610.1">
    <property type="protein sequence ID" value="AT3G62610.1"/>
    <property type="gene ID" value="AT3G62610"/>
</dbReference>
<dbReference type="KEGG" id="ath:AT3G62610"/>
<dbReference type="Araport" id="AT3G62610"/>
<dbReference type="TAIR" id="AT3G62610">
    <property type="gene designation" value="MYB11"/>
</dbReference>
<dbReference type="eggNOG" id="KOG0048">
    <property type="taxonomic scope" value="Eukaryota"/>
</dbReference>
<dbReference type="HOGENOM" id="CLU_028567_6_3_1"/>
<dbReference type="InParanoid" id="Q9LZK4"/>
<dbReference type="OMA" id="WDFVWRE"/>
<dbReference type="PhylomeDB" id="Q9LZK4"/>
<dbReference type="PRO" id="PR:Q9LZK4"/>
<dbReference type="Proteomes" id="UP000006548">
    <property type="component" value="Chromosome 3"/>
</dbReference>
<dbReference type="ExpressionAtlas" id="Q9LZK4">
    <property type="expression patterns" value="baseline and differential"/>
</dbReference>
<dbReference type="GO" id="GO:0005634">
    <property type="term" value="C:nucleus"/>
    <property type="evidence" value="ECO:0007669"/>
    <property type="project" value="UniProtKB-SubCell"/>
</dbReference>
<dbReference type="GO" id="GO:0003677">
    <property type="term" value="F:DNA binding"/>
    <property type="evidence" value="ECO:0007669"/>
    <property type="project" value="UniProtKB-KW"/>
</dbReference>
<dbReference type="GO" id="GO:0003700">
    <property type="term" value="F:DNA-binding transcription factor activity"/>
    <property type="evidence" value="ECO:0000250"/>
    <property type="project" value="TAIR"/>
</dbReference>
<dbReference type="GO" id="GO:1990841">
    <property type="term" value="F:promoter-specific chromatin binding"/>
    <property type="evidence" value="ECO:0000353"/>
    <property type="project" value="TAIR"/>
</dbReference>
<dbReference type="GO" id="GO:0051555">
    <property type="term" value="P:flavonol biosynthetic process"/>
    <property type="evidence" value="ECO:0000315"/>
    <property type="project" value="TAIR"/>
</dbReference>
<dbReference type="GO" id="GO:0008285">
    <property type="term" value="P:negative regulation of cell population proliferation"/>
    <property type="evidence" value="ECO:0000315"/>
    <property type="project" value="UniProtKB"/>
</dbReference>
<dbReference type="GO" id="GO:0048640">
    <property type="term" value="P:negative regulation of developmental growth"/>
    <property type="evidence" value="ECO:0000315"/>
    <property type="project" value="UniProtKB"/>
</dbReference>
<dbReference type="GO" id="GO:1900386">
    <property type="term" value="P:positive regulation of flavonol biosynthetic process"/>
    <property type="evidence" value="ECO:0000315"/>
    <property type="project" value="UniProtKB"/>
</dbReference>
<dbReference type="GO" id="GO:0009416">
    <property type="term" value="P:response to light stimulus"/>
    <property type="evidence" value="ECO:0000270"/>
    <property type="project" value="UniProtKB"/>
</dbReference>
<dbReference type="GO" id="GO:0010224">
    <property type="term" value="P:response to UV-B"/>
    <property type="evidence" value="ECO:0000315"/>
    <property type="project" value="UniProtKB"/>
</dbReference>
<dbReference type="CDD" id="cd00167">
    <property type="entry name" value="SANT"/>
    <property type="match status" value="2"/>
</dbReference>
<dbReference type="FunFam" id="1.10.10.60:FF:000121">
    <property type="entry name" value="Myb transcription factor"/>
    <property type="match status" value="1"/>
</dbReference>
<dbReference type="Gene3D" id="1.10.10.60">
    <property type="entry name" value="Homeodomain-like"/>
    <property type="match status" value="2"/>
</dbReference>
<dbReference type="InterPro" id="IPR009057">
    <property type="entry name" value="Homeodomain-like_sf"/>
</dbReference>
<dbReference type="InterPro" id="IPR017930">
    <property type="entry name" value="Myb_dom"/>
</dbReference>
<dbReference type="InterPro" id="IPR015495">
    <property type="entry name" value="Myb_TF_plants"/>
</dbReference>
<dbReference type="InterPro" id="IPR001005">
    <property type="entry name" value="SANT/Myb"/>
</dbReference>
<dbReference type="PANTHER" id="PTHR47999:SF111">
    <property type="entry name" value="TRANSCRIPTION FACTOR MYB11-RELATED"/>
    <property type="match status" value="1"/>
</dbReference>
<dbReference type="PANTHER" id="PTHR47999">
    <property type="entry name" value="TRANSCRIPTION FACTOR MYB8-RELATED-RELATED"/>
    <property type="match status" value="1"/>
</dbReference>
<dbReference type="Pfam" id="PF00249">
    <property type="entry name" value="Myb_DNA-binding"/>
    <property type="match status" value="2"/>
</dbReference>
<dbReference type="SMART" id="SM00717">
    <property type="entry name" value="SANT"/>
    <property type="match status" value="2"/>
</dbReference>
<dbReference type="SUPFAM" id="SSF46689">
    <property type="entry name" value="Homeodomain-like"/>
    <property type="match status" value="1"/>
</dbReference>
<dbReference type="PROSITE" id="PS51294">
    <property type="entry name" value="HTH_MYB"/>
    <property type="match status" value="2"/>
</dbReference>